<name>YFBU_ECODH</name>
<accession>B1X905</accession>
<organism>
    <name type="scientific">Escherichia coli (strain K12 / DH10B)</name>
    <dbReference type="NCBI Taxonomy" id="316385"/>
    <lineage>
        <taxon>Bacteria</taxon>
        <taxon>Pseudomonadati</taxon>
        <taxon>Pseudomonadota</taxon>
        <taxon>Gammaproteobacteria</taxon>
        <taxon>Enterobacterales</taxon>
        <taxon>Enterobacteriaceae</taxon>
        <taxon>Escherichia</taxon>
    </lineage>
</organism>
<comment type="similarity">
    <text evidence="1">Belongs to the UPF0304 family.</text>
</comment>
<evidence type="ECO:0000255" key="1">
    <source>
        <dbReference type="HAMAP-Rule" id="MF_00762"/>
    </source>
</evidence>
<sequence>MEMTNAQRLILSNQYKMMTMLDPANAERYRRLQTIIERGYGLQMRELDREFGELKEETCRTIIDIMEMYHALHVSWSNLQDQQSIDERRVTFLGFDAATEARYLGYVRFMVNVEGRYTHFDAGTHGFNAQTPMWEKYQRMLNVWHACPRQYHLSANEINQIINA</sequence>
<reference key="1">
    <citation type="journal article" date="2008" name="J. Bacteriol.">
        <title>The complete genome sequence of Escherichia coli DH10B: insights into the biology of a laboratory workhorse.</title>
        <authorList>
            <person name="Durfee T."/>
            <person name="Nelson R."/>
            <person name="Baldwin S."/>
            <person name="Plunkett G. III"/>
            <person name="Burland V."/>
            <person name="Mau B."/>
            <person name="Petrosino J.F."/>
            <person name="Qin X."/>
            <person name="Muzny D.M."/>
            <person name="Ayele M."/>
            <person name="Gibbs R.A."/>
            <person name="Csorgo B."/>
            <person name="Posfai G."/>
            <person name="Weinstock G.M."/>
            <person name="Blattner F.R."/>
        </authorList>
    </citation>
    <scope>NUCLEOTIDE SEQUENCE [LARGE SCALE GENOMIC DNA]</scope>
    <source>
        <strain>K12 / DH10B</strain>
    </source>
</reference>
<proteinExistence type="inferred from homology"/>
<gene>
    <name evidence="1" type="primary">yfbU</name>
    <name type="ordered locus">ECDH10B_2456</name>
</gene>
<feature type="chain" id="PRO_1000198333" description="UPF0304 protein YfbU">
    <location>
        <begin position="1"/>
        <end position="164"/>
    </location>
</feature>
<dbReference type="EMBL" id="CP000948">
    <property type="protein sequence ID" value="ACB03452.1"/>
    <property type="molecule type" value="Genomic_DNA"/>
</dbReference>
<dbReference type="RefSeq" id="WP_000426124.1">
    <property type="nucleotide sequence ID" value="NC_010473.1"/>
</dbReference>
<dbReference type="SMR" id="B1X905"/>
<dbReference type="KEGG" id="ecd:ECDH10B_2456"/>
<dbReference type="HOGENOM" id="CLU_101021_1_0_6"/>
<dbReference type="FunFam" id="1.10.3190.10:FF:000001">
    <property type="entry name" value="UPF0304 protein YfbU"/>
    <property type="match status" value="1"/>
</dbReference>
<dbReference type="Gene3D" id="1.10.287.680">
    <property type="entry name" value="Helix hairpin bin"/>
    <property type="match status" value="1"/>
</dbReference>
<dbReference type="Gene3D" id="1.10.3190.10">
    <property type="entry name" value="yfbu gene product, domain 2"/>
    <property type="match status" value="1"/>
</dbReference>
<dbReference type="HAMAP" id="MF_00762">
    <property type="entry name" value="UPF0304"/>
    <property type="match status" value="1"/>
</dbReference>
<dbReference type="InterPro" id="IPR005587">
    <property type="entry name" value="UPF0304_YfbU"/>
</dbReference>
<dbReference type="InterPro" id="IPR023146">
    <property type="entry name" value="YfbU_alpha-helical_sf"/>
</dbReference>
<dbReference type="InterPro" id="IPR023145">
    <property type="entry name" value="YfbU_helix-hairpin_sf"/>
</dbReference>
<dbReference type="NCBIfam" id="NF003936">
    <property type="entry name" value="PRK05445.1"/>
    <property type="match status" value="1"/>
</dbReference>
<dbReference type="Pfam" id="PF03887">
    <property type="entry name" value="YfbU"/>
    <property type="match status" value="1"/>
</dbReference>
<dbReference type="PIRSF" id="PIRSF006272">
    <property type="entry name" value="UCP006272"/>
    <property type="match status" value="1"/>
</dbReference>
<dbReference type="SUPFAM" id="SSF116960">
    <property type="entry name" value="YfbU-like"/>
    <property type="match status" value="1"/>
</dbReference>
<protein>
    <recommendedName>
        <fullName evidence="1">UPF0304 protein YfbU</fullName>
    </recommendedName>
</protein>